<proteinExistence type="predicted"/>
<gene>
    <name type="ordered locus">syc1184_c</name>
</gene>
<dbReference type="EMBL" id="X05302">
    <property type="protein sequence ID" value="CAA28921.1"/>
    <property type="molecule type" value="Genomic_DNA"/>
</dbReference>
<dbReference type="EMBL" id="AP008231">
    <property type="protein sequence ID" value="BAD79374.1"/>
    <property type="molecule type" value="Genomic_DNA"/>
</dbReference>
<dbReference type="EMBL" id="X53425">
    <property type="protein sequence ID" value="CAA37513.1"/>
    <property type="molecule type" value="Genomic_DNA"/>
</dbReference>
<dbReference type="PIR" id="S07286">
    <property type="entry name" value="S07286"/>
</dbReference>
<dbReference type="SMR" id="P08442"/>
<dbReference type="KEGG" id="syc:syc1184_c"/>
<dbReference type="eggNOG" id="COG2227">
    <property type="taxonomic scope" value="Bacteria"/>
</dbReference>
<dbReference type="Proteomes" id="UP000001175">
    <property type="component" value="Chromosome"/>
</dbReference>
<dbReference type="GO" id="GO:0008168">
    <property type="term" value="F:methyltransferase activity"/>
    <property type="evidence" value="ECO:0007669"/>
    <property type="project" value="TreeGrafter"/>
</dbReference>
<dbReference type="CDD" id="cd02440">
    <property type="entry name" value="AdoMet_MTases"/>
    <property type="match status" value="1"/>
</dbReference>
<dbReference type="Gene3D" id="3.40.50.150">
    <property type="entry name" value="Vaccinia Virus protein VP39"/>
    <property type="match status" value="1"/>
</dbReference>
<dbReference type="InterPro" id="IPR041698">
    <property type="entry name" value="Methyltransf_25"/>
</dbReference>
<dbReference type="InterPro" id="IPR029063">
    <property type="entry name" value="SAM-dependent_MTases_sf"/>
</dbReference>
<dbReference type="PANTHER" id="PTHR43464">
    <property type="entry name" value="METHYLTRANSFERASE"/>
    <property type="match status" value="1"/>
</dbReference>
<dbReference type="PANTHER" id="PTHR43464:SF91">
    <property type="entry name" value="SLL0487 PROTEIN"/>
    <property type="match status" value="1"/>
</dbReference>
<dbReference type="Pfam" id="PF13649">
    <property type="entry name" value="Methyltransf_25"/>
    <property type="match status" value="1"/>
</dbReference>
<dbReference type="SUPFAM" id="SSF53335">
    <property type="entry name" value="S-adenosyl-L-methionine-dependent methyltransferases"/>
    <property type="match status" value="1"/>
</dbReference>
<name>Y1184_SYNP6</name>
<sequence>MKLMDSTLLGRSRFSFFAAMPDSVTQAVSALYDAYPFPPEPMQDGPPPGYNWRWHYPSAYAFCTGRAPQLGRPRILDAGCGTGVSTDYLAHLNPSAEITAIDISAGTLAVAQERCQRSGVADRIHFQQLSLYDVAQLPGEFDQINCVGVLHHLEDPDRGLAALASKLAPGGILHIFVYAEIGRAEIRQMQEAIALLQGERRGDYRDGVAIGREIFSQLPANNRLRRREEERWALENQRDECFADMYVHPQEIDYNTETLRRWIEGSGLTFLGFSDRDRWQPDRLFGSSDTLRDRFQSLSKWQRYRLIELLDPEITHFEFFLGRSPLPQYDWSDNDQLLHAKPVRNECLYGWPSRDIFDPDYRPRTLSEAEYAFLEQCDRPLDSALTVAELLQTSSLDLAAVRQLIDQQLILLVPAQT</sequence>
<protein>
    <recommendedName>
        <fullName>Uncharacterized protein syc1184_c</fullName>
    </recommendedName>
</protein>
<accession>P08442</accession>
<accession>Q44110</accession>
<evidence type="ECO:0000305" key="1"/>
<organism>
    <name type="scientific">Synechococcus sp. (strain ATCC 27144 / PCC 6301 / SAUG 1402/1)</name>
    <name type="common">Anacystis nidulans</name>
    <dbReference type="NCBI Taxonomy" id="269084"/>
    <lineage>
        <taxon>Bacteria</taxon>
        <taxon>Bacillati</taxon>
        <taxon>Cyanobacteriota</taxon>
        <taxon>Cyanophyceae</taxon>
        <taxon>Synechococcales</taxon>
        <taxon>Synechococcaceae</taxon>
        <taxon>Synechococcus</taxon>
    </lineage>
</organism>
<comment type="similarity">
    <text evidence="1">To M.tuberculosis Rv2067c.</text>
</comment>
<reference key="1">
    <citation type="journal article" date="1987" name="J. Mol. Biol.">
        <title>The organization and sequence of the genes for ATP synthase subunits in the cyanobacterium Synechococcus 6301. Support for an endosymbiotic origin of chloroplasts.</title>
        <authorList>
            <person name="Cozens A.L."/>
            <person name="Walker J.E."/>
        </authorList>
    </citation>
    <scope>NUCLEOTIDE SEQUENCE [GENOMIC DNA]</scope>
</reference>
<reference key="2">
    <citation type="journal article" date="2007" name="Photosyn. Res.">
        <title>Complete nucleotide sequence of the freshwater unicellular cyanobacterium Synechococcus elongatus PCC 6301 chromosome: gene content and organization.</title>
        <authorList>
            <person name="Sugita C."/>
            <person name="Ogata K."/>
            <person name="Shikata M."/>
            <person name="Jikuya H."/>
            <person name="Takano J."/>
            <person name="Furumichi M."/>
            <person name="Kanehisa M."/>
            <person name="Omata T."/>
            <person name="Sugiura M."/>
            <person name="Sugita M."/>
        </authorList>
    </citation>
    <scope>NUCLEOTIDE SEQUENCE [LARGE SCALE GENOMIC DNA]</scope>
    <source>
        <strain>ATCC 27144 / PCC 6301 / SAUG 1402/1</strain>
    </source>
</reference>
<reference key="3">
    <citation type="journal article" date="1991" name="J. Biol. Chem.">
        <title>The 'anchor polypeptide' of cyanobacterial phycobilisomes. Molecular characterization of the Synechococcus sp. PCC 6301 apcE gene.</title>
        <authorList>
            <person name="Capuano V."/>
            <person name="Braux A.-S."/>
            <person name="Tandeau de Marsac N."/>
            <person name="Houmard J."/>
        </authorList>
    </citation>
    <scope>NUCLEOTIDE SEQUENCE [GENOMIC DNA] OF 20-63</scope>
</reference>
<feature type="chain" id="PRO_0000066061" description="Uncharacterized protein syc1184_c">
    <location>
        <begin position="1"/>
        <end position="417"/>
    </location>
</feature>